<organism>
    <name type="scientific">Streptococcus pyogenes serotype M6 (strain ATCC BAA-946 / MGAS10394)</name>
    <dbReference type="NCBI Taxonomy" id="286636"/>
    <lineage>
        <taxon>Bacteria</taxon>
        <taxon>Bacillati</taxon>
        <taxon>Bacillota</taxon>
        <taxon>Bacilli</taxon>
        <taxon>Lactobacillales</taxon>
        <taxon>Streptococcaceae</taxon>
        <taxon>Streptococcus</taxon>
    </lineage>
</organism>
<protein>
    <recommendedName>
        <fullName evidence="1">Dihydroorotase</fullName>
        <shortName evidence="1">DHOase</shortName>
        <ecNumber evidence="1">3.5.2.3</ecNumber>
    </recommendedName>
</protein>
<dbReference type="EC" id="3.5.2.3" evidence="1"/>
<dbReference type="EMBL" id="CP000003">
    <property type="protein sequence ID" value="AAT86861.1"/>
    <property type="molecule type" value="Genomic_DNA"/>
</dbReference>
<dbReference type="RefSeq" id="WP_002984912.1">
    <property type="nucleotide sequence ID" value="NC_006086.1"/>
</dbReference>
<dbReference type="SMR" id="Q5XCK2"/>
<dbReference type="KEGG" id="spa:M6_Spy0726"/>
<dbReference type="HOGENOM" id="CLU_015572_1_0_9"/>
<dbReference type="UniPathway" id="UPA00070">
    <property type="reaction ID" value="UER00117"/>
</dbReference>
<dbReference type="Proteomes" id="UP000001167">
    <property type="component" value="Chromosome"/>
</dbReference>
<dbReference type="GO" id="GO:0005737">
    <property type="term" value="C:cytoplasm"/>
    <property type="evidence" value="ECO:0007669"/>
    <property type="project" value="TreeGrafter"/>
</dbReference>
<dbReference type="GO" id="GO:0004038">
    <property type="term" value="F:allantoinase activity"/>
    <property type="evidence" value="ECO:0007669"/>
    <property type="project" value="TreeGrafter"/>
</dbReference>
<dbReference type="GO" id="GO:0004151">
    <property type="term" value="F:dihydroorotase activity"/>
    <property type="evidence" value="ECO:0007669"/>
    <property type="project" value="UniProtKB-UniRule"/>
</dbReference>
<dbReference type="GO" id="GO:0008270">
    <property type="term" value="F:zinc ion binding"/>
    <property type="evidence" value="ECO:0007669"/>
    <property type="project" value="UniProtKB-UniRule"/>
</dbReference>
<dbReference type="GO" id="GO:0044205">
    <property type="term" value="P:'de novo' UMP biosynthetic process"/>
    <property type="evidence" value="ECO:0007669"/>
    <property type="project" value="UniProtKB-UniRule"/>
</dbReference>
<dbReference type="GO" id="GO:0006145">
    <property type="term" value="P:purine nucleobase catabolic process"/>
    <property type="evidence" value="ECO:0007669"/>
    <property type="project" value="TreeGrafter"/>
</dbReference>
<dbReference type="CDD" id="cd01317">
    <property type="entry name" value="DHOase_IIa"/>
    <property type="match status" value="1"/>
</dbReference>
<dbReference type="Gene3D" id="3.20.20.140">
    <property type="entry name" value="Metal-dependent hydrolases"/>
    <property type="match status" value="1"/>
</dbReference>
<dbReference type="HAMAP" id="MF_00220_B">
    <property type="entry name" value="PyrC_classI_B"/>
    <property type="match status" value="1"/>
</dbReference>
<dbReference type="InterPro" id="IPR006680">
    <property type="entry name" value="Amidohydro-rel"/>
</dbReference>
<dbReference type="InterPro" id="IPR004722">
    <property type="entry name" value="DHOase"/>
</dbReference>
<dbReference type="InterPro" id="IPR050138">
    <property type="entry name" value="DHOase/Allantoinase_Hydrolase"/>
</dbReference>
<dbReference type="InterPro" id="IPR002195">
    <property type="entry name" value="Dihydroorotase_CS"/>
</dbReference>
<dbReference type="InterPro" id="IPR011059">
    <property type="entry name" value="Metal-dep_hydrolase_composite"/>
</dbReference>
<dbReference type="InterPro" id="IPR032466">
    <property type="entry name" value="Metal_Hydrolase"/>
</dbReference>
<dbReference type="NCBIfam" id="NF006839">
    <property type="entry name" value="PRK09357.1-4"/>
    <property type="match status" value="1"/>
</dbReference>
<dbReference type="NCBIfam" id="TIGR00857">
    <property type="entry name" value="pyrC_multi"/>
    <property type="match status" value="1"/>
</dbReference>
<dbReference type="PANTHER" id="PTHR43668">
    <property type="entry name" value="ALLANTOINASE"/>
    <property type="match status" value="1"/>
</dbReference>
<dbReference type="PANTHER" id="PTHR43668:SF2">
    <property type="entry name" value="ALLANTOINASE"/>
    <property type="match status" value="1"/>
</dbReference>
<dbReference type="Pfam" id="PF01979">
    <property type="entry name" value="Amidohydro_1"/>
    <property type="match status" value="1"/>
</dbReference>
<dbReference type="SUPFAM" id="SSF51338">
    <property type="entry name" value="Composite domain of metallo-dependent hydrolases"/>
    <property type="match status" value="1"/>
</dbReference>
<dbReference type="SUPFAM" id="SSF51556">
    <property type="entry name" value="Metallo-dependent hydrolases"/>
    <property type="match status" value="1"/>
</dbReference>
<dbReference type="PROSITE" id="PS00482">
    <property type="entry name" value="DIHYDROOROTASE_1"/>
    <property type="match status" value="1"/>
</dbReference>
<dbReference type="PROSITE" id="PS00483">
    <property type="entry name" value="DIHYDROOROTASE_2"/>
    <property type="match status" value="1"/>
</dbReference>
<feature type="chain" id="PRO_0000147259" description="Dihydroorotase">
    <location>
        <begin position="1"/>
        <end position="422"/>
    </location>
</feature>
<feature type="active site" evidence="1">
    <location>
        <position position="303"/>
    </location>
</feature>
<feature type="binding site" evidence="1">
    <location>
        <position position="59"/>
    </location>
    <ligand>
        <name>Zn(2+)</name>
        <dbReference type="ChEBI" id="CHEBI:29105"/>
        <label>1</label>
    </ligand>
</feature>
<feature type="binding site" evidence="1">
    <location>
        <begin position="61"/>
        <end position="63"/>
    </location>
    <ligand>
        <name>substrate</name>
    </ligand>
</feature>
<feature type="binding site" evidence="1">
    <location>
        <position position="61"/>
    </location>
    <ligand>
        <name>Zn(2+)</name>
        <dbReference type="ChEBI" id="CHEBI:29105"/>
        <label>1</label>
    </ligand>
</feature>
<feature type="binding site" evidence="1">
    <location>
        <position position="93"/>
    </location>
    <ligand>
        <name>substrate</name>
    </ligand>
</feature>
<feature type="binding site" evidence="1">
    <location>
        <position position="150"/>
    </location>
    <ligand>
        <name>Zn(2+)</name>
        <dbReference type="ChEBI" id="CHEBI:29105"/>
        <label>1</label>
    </ligand>
</feature>
<feature type="binding site" evidence="1">
    <location>
        <position position="150"/>
    </location>
    <ligand>
        <name>Zn(2+)</name>
        <dbReference type="ChEBI" id="CHEBI:29105"/>
        <label>2</label>
    </ligand>
</feature>
<feature type="binding site" evidence="1">
    <location>
        <position position="177"/>
    </location>
    <ligand>
        <name>Zn(2+)</name>
        <dbReference type="ChEBI" id="CHEBI:29105"/>
        <label>2</label>
    </ligand>
</feature>
<feature type="binding site" evidence="1">
    <location>
        <position position="230"/>
    </location>
    <ligand>
        <name>Zn(2+)</name>
        <dbReference type="ChEBI" id="CHEBI:29105"/>
        <label>2</label>
    </ligand>
</feature>
<feature type="binding site" evidence="1">
    <location>
        <position position="276"/>
    </location>
    <ligand>
        <name>substrate</name>
    </ligand>
</feature>
<feature type="binding site" evidence="1">
    <location>
        <position position="303"/>
    </location>
    <ligand>
        <name>Zn(2+)</name>
        <dbReference type="ChEBI" id="CHEBI:29105"/>
        <label>1</label>
    </ligand>
</feature>
<feature type="binding site" evidence="1">
    <location>
        <position position="307"/>
    </location>
    <ligand>
        <name>substrate</name>
    </ligand>
</feature>
<sequence>MILIKNGRVMDPKSQRDQVADVLIDGKQIVKIASAIECQEAQVIDASGLIVAPGLVDIHVHFREPGQTHKEDIHTGALAAAAGGVTTVVMMANTNPVISDVETLQEVLASAAKEKIHIYTNASVTQAFNGKDVTDFKALLEAGAVSFSDDGIPLESSKVLKEAFDLANANQTFISLHEEDPQLNGVLGFNEGIAEEHFHFCGATGVAEYSMIARDVMIAYDRQAHVHIQHLSKAESVQVVAFAQQLGAKVTAEVSPQHFSTTEDLLLTAGTSAKMNPPLRTQRDRLAVIEGLKSGVITVIATDHAPHHKDEKAVDDMTKAPSGMTGLETSLSLGLTHLVEPGHLTLMSLLEKMTLNPALLYGFDAGYLAENGPADLVIFADKQERLITENFASKASNSPFIGNKLKGVVKYTIADGEVVYPN</sequence>
<accession>Q5XCK2</accession>
<reference key="1">
    <citation type="journal article" date="2004" name="J. Infect. Dis.">
        <title>Progress toward characterization of the group A Streptococcus metagenome: complete genome sequence of a macrolide-resistant serotype M6 strain.</title>
        <authorList>
            <person name="Banks D.J."/>
            <person name="Porcella S.F."/>
            <person name="Barbian K.D."/>
            <person name="Beres S.B."/>
            <person name="Philips L.E."/>
            <person name="Voyich J.M."/>
            <person name="DeLeo F.R."/>
            <person name="Martin J.M."/>
            <person name="Somerville G.A."/>
            <person name="Musser J.M."/>
        </authorList>
    </citation>
    <scope>NUCLEOTIDE SEQUENCE [LARGE SCALE GENOMIC DNA]</scope>
    <source>
        <strain>ATCC BAA-946 / MGAS10394</strain>
    </source>
</reference>
<evidence type="ECO:0000255" key="1">
    <source>
        <dbReference type="HAMAP-Rule" id="MF_00220"/>
    </source>
</evidence>
<gene>
    <name evidence="1" type="primary">pyrC</name>
    <name type="ordered locus">M6_Spy0726</name>
</gene>
<proteinExistence type="inferred from homology"/>
<comment type="function">
    <text evidence="1">Catalyzes the reversible cyclization of carbamoyl aspartate to dihydroorotate.</text>
</comment>
<comment type="catalytic activity">
    <reaction evidence="1">
        <text>(S)-dihydroorotate + H2O = N-carbamoyl-L-aspartate + H(+)</text>
        <dbReference type="Rhea" id="RHEA:24296"/>
        <dbReference type="ChEBI" id="CHEBI:15377"/>
        <dbReference type="ChEBI" id="CHEBI:15378"/>
        <dbReference type="ChEBI" id="CHEBI:30864"/>
        <dbReference type="ChEBI" id="CHEBI:32814"/>
        <dbReference type="EC" id="3.5.2.3"/>
    </reaction>
</comment>
<comment type="cofactor">
    <cofactor evidence="1">
        <name>Zn(2+)</name>
        <dbReference type="ChEBI" id="CHEBI:29105"/>
    </cofactor>
    <text evidence="1">Binds 2 Zn(2+) ions per subunit.</text>
</comment>
<comment type="pathway">
    <text evidence="1">Pyrimidine metabolism; UMP biosynthesis via de novo pathway; (S)-dihydroorotate from bicarbonate: step 3/3.</text>
</comment>
<comment type="similarity">
    <text evidence="1">Belongs to the metallo-dependent hydrolases superfamily. DHOase family. Class I DHOase subfamily.</text>
</comment>
<keyword id="KW-0378">Hydrolase</keyword>
<keyword id="KW-0479">Metal-binding</keyword>
<keyword id="KW-0665">Pyrimidine biosynthesis</keyword>
<keyword id="KW-0862">Zinc</keyword>
<name>PYRC_STRP6</name>